<sequence>MAGALFEPSFAAAHPAGLLRRPVTRTVVLSVAATSIAHMFEISLPDPTELCRSDDGALVAAIEDCARVEAAASARRLSAIAELTGRRTGADQRADWACDFWDCAAAEVAAALTISHGKASGQMHLSLALNRLPQVAALFLAGHLGARLFSIIAWRTYLVRDPHALSLLDAALAEHAGAWGPLSAPKLEKAIDSWIDRYDPGALRRSRISARTRDLCIGDPDEDAGTAALWGRLYATDAAMLDRRLTEMAHGVCEDDPRTLAQRRADALGALAAGADHLACGCGKPDCPSGAGNDERAAGVVIHVVADASALDAQPDPHLSGDEPPSRPLTPETTLFEALTPDPEPDPPATHAPAELITTGGGVVPAPLLAELIRGGATISQVRHPGDLAAEPHYRPSAKLAEFVRMRDLTCRFPGCDVPAEFCDIDHSAPWPLGPTHPSNLKCACRKHHLLKTFWTGWRDVQLPDGTVIWTAPNGHTYTTHPGSRIFFPTWHTTTAELPQTSTAAVNVDARGLMMPRRRRTRAAELAHRINAERALNDAYMAERNKPPSF</sequence>
<gene>
    <name type="ordered locus">Rv2100</name>
    <name type="ORF">MTCY49.40</name>
</gene>
<comment type="similarity">
    <text evidence="3">To M.tuberculosis Rv3776.</text>
</comment>
<proteinExistence type="inferred from homology"/>
<name>Y2100_MYCTU</name>
<accession>P9WLJ3</accession>
<accession>L0T8V0</accession>
<accession>P64945</accession>
<accession>Q10709</accession>
<feature type="signal peptide" evidence="1">
    <location>
        <begin position="1"/>
        <end position="13"/>
    </location>
</feature>
<feature type="chain" id="PRO_0000014124" description="Uncharacterized protein Rv2100">
    <location>
        <begin position="14"/>
        <end position="550"/>
    </location>
</feature>
<feature type="region of interest" description="Disordered" evidence="2">
    <location>
        <begin position="312"/>
        <end position="358"/>
    </location>
</feature>
<evidence type="ECO:0000255" key="1"/>
<evidence type="ECO:0000256" key="2">
    <source>
        <dbReference type="SAM" id="MobiDB-lite"/>
    </source>
</evidence>
<evidence type="ECO:0000305" key="3"/>
<organism>
    <name type="scientific">Mycobacterium tuberculosis (strain ATCC 25618 / H37Rv)</name>
    <dbReference type="NCBI Taxonomy" id="83332"/>
    <lineage>
        <taxon>Bacteria</taxon>
        <taxon>Bacillati</taxon>
        <taxon>Actinomycetota</taxon>
        <taxon>Actinomycetes</taxon>
        <taxon>Mycobacteriales</taxon>
        <taxon>Mycobacteriaceae</taxon>
        <taxon>Mycobacterium</taxon>
        <taxon>Mycobacterium tuberculosis complex</taxon>
    </lineage>
</organism>
<keyword id="KW-1185">Reference proteome</keyword>
<keyword id="KW-0732">Signal</keyword>
<reference key="1">
    <citation type="journal article" date="1998" name="Nature">
        <title>Deciphering the biology of Mycobacterium tuberculosis from the complete genome sequence.</title>
        <authorList>
            <person name="Cole S.T."/>
            <person name="Brosch R."/>
            <person name="Parkhill J."/>
            <person name="Garnier T."/>
            <person name="Churcher C.M."/>
            <person name="Harris D.E."/>
            <person name="Gordon S.V."/>
            <person name="Eiglmeier K."/>
            <person name="Gas S."/>
            <person name="Barry C.E. III"/>
            <person name="Tekaia F."/>
            <person name="Badcock K."/>
            <person name="Basham D."/>
            <person name="Brown D."/>
            <person name="Chillingworth T."/>
            <person name="Connor R."/>
            <person name="Davies R.M."/>
            <person name="Devlin K."/>
            <person name="Feltwell T."/>
            <person name="Gentles S."/>
            <person name="Hamlin N."/>
            <person name="Holroyd S."/>
            <person name="Hornsby T."/>
            <person name="Jagels K."/>
            <person name="Krogh A."/>
            <person name="McLean J."/>
            <person name="Moule S."/>
            <person name="Murphy L.D."/>
            <person name="Oliver S."/>
            <person name="Osborne J."/>
            <person name="Quail M.A."/>
            <person name="Rajandream M.A."/>
            <person name="Rogers J."/>
            <person name="Rutter S."/>
            <person name="Seeger K."/>
            <person name="Skelton S."/>
            <person name="Squares S."/>
            <person name="Squares R."/>
            <person name="Sulston J.E."/>
            <person name="Taylor K."/>
            <person name="Whitehead S."/>
            <person name="Barrell B.G."/>
        </authorList>
    </citation>
    <scope>NUCLEOTIDE SEQUENCE [LARGE SCALE GENOMIC DNA]</scope>
    <source>
        <strain>ATCC 25618 / H37Rv</strain>
    </source>
</reference>
<dbReference type="EMBL" id="AL123456">
    <property type="protein sequence ID" value="CCP44875.1"/>
    <property type="molecule type" value="Genomic_DNA"/>
</dbReference>
<dbReference type="PIR" id="G70768">
    <property type="entry name" value="G70768"/>
</dbReference>
<dbReference type="RefSeq" id="NP_216616.1">
    <property type="nucleotide sequence ID" value="NC_000962.3"/>
</dbReference>
<dbReference type="RefSeq" id="WP_003900464.1">
    <property type="nucleotide sequence ID" value="NC_000962.3"/>
</dbReference>
<dbReference type="STRING" id="83332.Rv2100"/>
<dbReference type="PaxDb" id="83332-Rv2100"/>
<dbReference type="DNASU" id="888454"/>
<dbReference type="GeneID" id="888454"/>
<dbReference type="KEGG" id="mtu:Rv2100"/>
<dbReference type="KEGG" id="mtv:RVBD_2100"/>
<dbReference type="TubercuList" id="Rv2100"/>
<dbReference type="eggNOG" id="COG1403">
    <property type="taxonomic scope" value="Bacteria"/>
</dbReference>
<dbReference type="InParanoid" id="P9WLJ3"/>
<dbReference type="OrthoDB" id="5242272at2"/>
<dbReference type="PhylomeDB" id="P9WLJ3"/>
<dbReference type="Proteomes" id="UP000001584">
    <property type="component" value="Chromosome"/>
</dbReference>
<dbReference type="GO" id="GO:0009274">
    <property type="term" value="C:peptidoglycan-based cell wall"/>
    <property type="evidence" value="ECO:0007005"/>
    <property type="project" value="MTBBASE"/>
</dbReference>
<dbReference type="GO" id="GO:0005886">
    <property type="term" value="C:plasma membrane"/>
    <property type="evidence" value="ECO:0007005"/>
    <property type="project" value="MTBBASE"/>
</dbReference>
<dbReference type="CDD" id="cd00085">
    <property type="entry name" value="HNHc"/>
    <property type="match status" value="1"/>
</dbReference>
<dbReference type="InterPro" id="IPR003870">
    <property type="entry name" value="DUF222"/>
</dbReference>
<dbReference type="InterPro" id="IPR003615">
    <property type="entry name" value="HNH_nuc"/>
</dbReference>
<dbReference type="Pfam" id="PF02720">
    <property type="entry name" value="DUF222"/>
    <property type="match status" value="1"/>
</dbReference>
<dbReference type="SMART" id="SM00507">
    <property type="entry name" value="HNHc"/>
    <property type="match status" value="1"/>
</dbReference>
<protein>
    <recommendedName>
        <fullName>Uncharacterized protein Rv2100</fullName>
    </recommendedName>
</protein>